<sequence length="160" mass="16824">MSWSRVIAYGLLPGLALALTCGAGLLKWQDGAVRDAAVARAESVRAATDGTTALLSYRPDTVQHDLESARSRLTGTFLDAYTQLTHDVVIPGAQQKQISAVATVAAAASVSTSADRAVVLLFVNQTITVGKDAPTTAASSVRVTLDNINGRWLISQFEPI</sequence>
<comment type="subcellular location">
    <subcellularLocation>
        <location evidence="2">Cell outer membrane</location>
    </subcellularLocation>
</comment>
<dbReference type="EMBL" id="AL123456">
    <property type="protein sequence ID" value="CCP44742.1"/>
    <property type="molecule type" value="Genomic_DNA"/>
</dbReference>
<dbReference type="PIR" id="H70889">
    <property type="entry name" value="H70889"/>
</dbReference>
<dbReference type="RefSeq" id="NP_216489.1">
    <property type="nucleotide sequence ID" value="NC_000962.3"/>
</dbReference>
<dbReference type="RefSeq" id="WP_003899110.1">
    <property type="nucleotide sequence ID" value="NZ_NVQJ01000048.1"/>
</dbReference>
<dbReference type="STRING" id="83332.Rv1973"/>
<dbReference type="PaxDb" id="83332-Rv1973"/>
<dbReference type="GeneID" id="885936"/>
<dbReference type="KEGG" id="mtu:Rv1973"/>
<dbReference type="KEGG" id="mtv:RVBD_1973"/>
<dbReference type="TubercuList" id="Rv1973"/>
<dbReference type="eggNOG" id="COG0443">
    <property type="taxonomic scope" value="Bacteria"/>
</dbReference>
<dbReference type="InParanoid" id="P9WJ77"/>
<dbReference type="OrthoDB" id="3536396at2"/>
<dbReference type="Proteomes" id="UP000001584">
    <property type="component" value="Chromosome"/>
</dbReference>
<dbReference type="GO" id="GO:0009279">
    <property type="term" value="C:cell outer membrane"/>
    <property type="evidence" value="ECO:0000314"/>
    <property type="project" value="MTBBASE"/>
</dbReference>
<dbReference type="PANTHER" id="PTHR37042">
    <property type="entry name" value="OUTER MEMBRANE PROTEIN RV1973"/>
    <property type="match status" value="1"/>
</dbReference>
<dbReference type="PANTHER" id="PTHR37042:SF4">
    <property type="entry name" value="OUTER MEMBRANE PROTEIN RV1973"/>
    <property type="match status" value="1"/>
</dbReference>
<gene>
    <name type="ordered locus">Rv1973</name>
</gene>
<reference key="1">
    <citation type="journal article" date="1998" name="Nature">
        <title>Deciphering the biology of Mycobacterium tuberculosis from the complete genome sequence.</title>
        <authorList>
            <person name="Cole S.T."/>
            <person name="Brosch R."/>
            <person name="Parkhill J."/>
            <person name="Garnier T."/>
            <person name="Churcher C.M."/>
            <person name="Harris D.E."/>
            <person name="Gordon S.V."/>
            <person name="Eiglmeier K."/>
            <person name="Gas S."/>
            <person name="Barry C.E. III"/>
            <person name="Tekaia F."/>
            <person name="Badcock K."/>
            <person name="Basham D."/>
            <person name="Brown D."/>
            <person name="Chillingworth T."/>
            <person name="Connor R."/>
            <person name="Davies R.M."/>
            <person name="Devlin K."/>
            <person name="Feltwell T."/>
            <person name="Gentles S."/>
            <person name="Hamlin N."/>
            <person name="Holroyd S."/>
            <person name="Hornsby T."/>
            <person name="Jagels K."/>
            <person name="Krogh A."/>
            <person name="McLean J."/>
            <person name="Moule S."/>
            <person name="Murphy L.D."/>
            <person name="Oliver S."/>
            <person name="Osborne J."/>
            <person name="Quail M.A."/>
            <person name="Rajandream M.A."/>
            <person name="Rogers J."/>
            <person name="Rutter S."/>
            <person name="Seeger K."/>
            <person name="Skelton S."/>
            <person name="Squares S."/>
            <person name="Squares R."/>
            <person name="Sulston J.E."/>
            <person name="Taylor K."/>
            <person name="Whitehead S."/>
            <person name="Barrell B.G."/>
        </authorList>
    </citation>
    <scope>NUCLEOTIDE SEQUENCE [LARGE SCALE GENOMIC DNA]</scope>
    <source>
        <strain>ATCC 25618 / H37Rv</strain>
    </source>
</reference>
<reference key="2">
    <citation type="journal article" date="2008" name="Tuberculosis">
        <title>Identification of outer membrane proteins of Mycobacterium tuberculosis.</title>
        <authorList>
            <person name="Song H."/>
            <person name="Sandie R."/>
            <person name="Wang Y."/>
            <person name="Andrade-Navarro M.A."/>
            <person name="Niederweis M."/>
        </authorList>
    </citation>
    <scope>SUBCELLULAR LOCATION</scope>
    <source>
        <strain>ATCC 25618 / H37Rv</strain>
    </source>
</reference>
<feature type="signal peptide" evidence="1">
    <location>
        <begin position="1"/>
        <end position="22"/>
    </location>
</feature>
<feature type="chain" id="PRO_0000415941" description="Outer membrane protein Rv1973">
    <location>
        <begin position="23"/>
        <end position="160"/>
    </location>
</feature>
<name>OMP2_MYCTU</name>
<evidence type="ECO:0000255" key="1"/>
<evidence type="ECO:0000269" key="2">
    <source>
    </source>
</evidence>
<organism>
    <name type="scientific">Mycobacterium tuberculosis (strain ATCC 25618 / H37Rv)</name>
    <dbReference type="NCBI Taxonomy" id="83332"/>
    <lineage>
        <taxon>Bacteria</taxon>
        <taxon>Bacillati</taxon>
        <taxon>Actinomycetota</taxon>
        <taxon>Actinomycetes</taxon>
        <taxon>Mycobacteriales</taxon>
        <taxon>Mycobacteriaceae</taxon>
        <taxon>Mycobacterium</taxon>
        <taxon>Mycobacterium tuberculosis complex</taxon>
    </lineage>
</organism>
<protein>
    <recommendedName>
        <fullName>Outer membrane protein Rv1973</fullName>
    </recommendedName>
</protein>
<proteinExistence type="inferred from homology"/>
<accession>P9WJ77</accession>
<accession>L0T890</accession>
<accession>O53974</accession>
<accession>Q7D7N3</accession>
<keyword id="KW-0998">Cell outer membrane</keyword>
<keyword id="KW-0472">Membrane</keyword>
<keyword id="KW-1185">Reference proteome</keyword>
<keyword id="KW-0732">Signal</keyword>